<evidence type="ECO:0000255" key="1">
    <source>
        <dbReference type="HAMAP-Rule" id="MF_01309"/>
    </source>
</evidence>
<evidence type="ECO:0000256" key="2">
    <source>
        <dbReference type="SAM" id="MobiDB-lite"/>
    </source>
</evidence>
<evidence type="ECO:0000305" key="3"/>
<gene>
    <name evidence="1" type="primary">rpsC</name>
    <name type="ordered locus">MAB_3814c</name>
</gene>
<keyword id="KW-1185">Reference proteome</keyword>
<keyword id="KW-0687">Ribonucleoprotein</keyword>
<keyword id="KW-0689">Ribosomal protein</keyword>
<keyword id="KW-0694">RNA-binding</keyword>
<keyword id="KW-0699">rRNA-binding</keyword>
<name>RS3_MYCA9</name>
<protein>
    <recommendedName>
        <fullName evidence="1">Small ribosomal subunit protein uS3</fullName>
    </recommendedName>
    <alternativeName>
        <fullName evidence="3">30S ribosomal protein S3</fullName>
    </alternativeName>
</protein>
<dbReference type="EMBL" id="CU458896">
    <property type="protein sequence ID" value="CAM63889.1"/>
    <property type="molecule type" value="Genomic_DNA"/>
</dbReference>
<dbReference type="RefSeq" id="WP_005080488.1">
    <property type="nucleotide sequence ID" value="NZ_MLCG01000001.1"/>
</dbReference>
<dbReference type="SMR" id="B1MGE4"/>
<dbReference type="GeneID" id="93380753"/>
<dbReference type="KEGG" id="mab:MAB_3814c"/>
<dbReference type="Proteomes" id="UP000007137">
    <property type="component" value="Chromosome"/>
</dbReference>
<dbReference type="GO" id="GO:0022627">
    <property type="term" value="C:cytosolic small ribosomal subunit"/>
    <property type="evidence" value="ECO:0007669"/>
    <property type="project" value="TreeGrafter"/>
</dbReference>
<dbReference type="GO" id="GO:0003729">
    <property type="term" value="F:mRNA binding"/>
    <property type="evidence" value="ECO:0007669"/>
    <property type="project" value="UniProtKB-UniRule"/>
</dbReference>
<dbReference type="GO" id="GO:0019843">
    <property type="term" value="F:rRNA binding"/>
    <property type="evidence" value="ECO:0007669"/>
    <property type="project" value="UniProtKB-UniRule"/>
</dbReference>
<dbReference type="GO" id="GO:0003735">
    <property type="term" value="F:structural constituent of ribosome"/>
    <property type="evidence" value="ECO:0007669"/>
    <property type="project" value="InterPro"/>
</dbReference>
<dbReference type="GO" id="GO:0006412">
    <property type="term" value="P:translation"/>
    <property type="evidence" value="ECO:0007669"/>
    <property type="project" value="UniProtKB-UniRule"/>
</dbReference>
<dbReference type="CDD" id="cd02412">
    <property type="entry name" value="KH-II_30S_S3"/>
    <property type="match status" value="1"/>
</dbReference>
<dbReference type="FunFam" id="3.30.1140.32:FF:000002">
    <property type="entry name" value="30S ribosomal protein S3"/>
    <property type="match status" value="1"/>
</dbReference>
<dbReference type="FunFam" id="3.30.300.20:FF:000001">
    <property type="entry name" value="30S ribosomal protein S3"/>
    <property type="match status" value="1"/>
</dbReference>
<dbReference type="Gene3D" id="3.30.300.20">
    <property type="match status" value="1"/>
</dbReference>
<dbReference type="Gene3D" id="3.30.1140.32">
    <property type="entry name" value="Ribosomal protein S3, C-terminal domain"/>
    <property type="match status" value="1"/>
</dbReference>
<dbReference type="HAMAP" id="MF_01309_B">
    <property type="entry name" value="Ribosomal_uS3_B"/>
    <property type="match status" value="1"/>
</dbReference>
<dbReference type="InterPro" id="IPR004087">
    <property type="entry name" value="KH_dom"/>
</dbReference>
<dbReference type="InterPro" id="IPR015946">
    <property type="entry name" value="KH_dom-like_a/b"/>
</dbReference>
<dbReference type="InterPro" id="IPR004044">
    <property type="entry name" value="KH_dom_type_2"/>
</dbReference>
<dbReference type="InterPro" id="IPR009019">
    <property type="entry name" value="KH_sf_prok-type"/>
</dbReference>
<dbReference type="InterPro" id="IPR036419">
    <property type="entry name" value="Ribosomal_S3_C_sf"/>
</dbReference>
<dbReference type="InterPro" id="IPR005704">
    <property type="entry name" value="Ribosomal_uS3_bac-typ"/>
</dbReference>
<dbReference type="InterPro" id="IPR001351">
    <property type="entry name" value="Ribosomal_uS3_C"/>
</dbReference>
<dbReference type="InterPro" id="IPR018280">
    <property type="entry name" value="Ribosomal_uS3_CS"/>
</dbReference>
<dbReference type="NCBIfam" id="TIGR01009">
    <property type="entry name" value="rpsC_bact"/>
    <property type="match status" value="1"/>
</dbReference>
<dbReference type="PANTHER" id="PTHR11760">
    <property type="entry name" value="30S/40S RIBOSOMAL PROTEIN S3"/>
    <property type="match status" value="1"/>
</dbReference>
<dbReference type="PANTHER" id="PTHR11760:SF19">
    <property type="entry name" value="SMALL RIBOSOMAL SUBUNIT PROTEIN US3C"/>
    <property type="match status" value="1"/>
</dbReference>
<dbReference type="Pfam" id="PF07650">
    <property type="entry name" value="KH_2"/>
    <property type="match status" value="1"/>
</dbReference>
<dbReference type="Pfam" id="PF00189">
    <property type="entry name" value="Ribosomal_S3_C"/>
    <property type="match status" value="1"/>
</dbReference>
<dbReference type="SMART" id="SM00322">
    <property type="entry name" value="KH"/>
    <property type="match status" value="1"/>
</dbReference>
<dbReference type="SUPFAM" id="SSF54814">
    <property type="entry name" value="Prokaryotic type KH domain (KH-domain type II)"/>
    <property type="match status" value="1"/>
</dbReference>
<dbReference type="SUPFAM" id="SSF54821">
    <property type="entry name" value="Ribosomal protein S3 C-terminal domain"/>
    <property type="match status" value="1"/>
</dbReference>
<dbReference type="PROSITE" id="PS50823">
    <property type="entry name" value="KH_TYPE_2"/>
    <property type="match status" value="1"/>
</dbReference>
<dbReference type="PROSITE" id="PS00548">
    <property type="entry name" value="RIBOSOMAL_S3"/>
    <property type="match status" value="1"/>
</dbReference>
<accession>B1MGE4</accession>
<reference key="1">
    <citation type="journal article" date="2009" name="PLoS ONE">
        <title>Non mycobacterial virulence genes in the genome of the emerging pathogen Mycobacterium abscessus.</title>
        <authorList>
            <person name="Ripoll F."/>
            <person name="Pasek S."/>
            <person name="Schenowitz C."/>
            <person name="Dossat C."/>
            <person name="Barbe V."/>
            <person name="Rottman M."/>
            <person name="Macheras E."/>
            <person name="Heym B."/>
            <person name="Herrmann J.L."/>
            <person name="Daffe M."/>
            <person name="Brosch R."/>
            <person name="Risler J.L."/>
            <person name="Gaillard J.L."/>
        </authorList>
    </citation>
    <scope>NUCLEOTIDE SEQUENCE [LARGE SCALE GENOMIC DNA]</scope>
    <source>
        <strain>ATCC 19977 / DSM 44196 / CCUG 20993 / CIP 104536 / JCM 13569 / NCTC 13031 / TMC 1543 / L948</strain>
    </source>
</reference>
<proteinExistence type="inferred from homology"/>
<sequence>MGQKINPHGFRLGITTDWKSRWYADKQYADYVKEDVAIRRLLATGLERAGIAKVEIERTRDRVRVDIHTARPGIVIGRRGTEADRIRADLEKLTGKQVQLNILEVKNPEAEAQLVAQGVAEQLSNRVAFRRAMRKAIQSAMRQPNVKGIRVQCSGRLGGAEMSRSEFYREGRVPLHTLRADIDYGLYEAKTTFGRIGVKVWIYKGDIVGGKRELAAAGVEAGRGAPDRPRRERPAGTRPRRSGSSGTTATSTEAGRAAAETPASDGASAPSAETTES</sequence>
<comment type="function">
    <text evidence="1">Binds the lower part of the 30S subunit head. Binds mRNA in the 70S ribosome, positioning it for translation.</text>
</comment>
<comment type="subunit">
    <text evidence="1">Part of the 30S ribosomal subunit. Forms a tight complex with proteins S10 and S14.</text>
</comment>
<comment type="similarity">
    <text evidence="1">Belongs to the universal ribosomal protein uS3 family.</text>
</comment>
<organism>
    <name type="scientific">Mycobacteroides abscessus (strain ATCC 19977 / DSM 44196 / CCUG 20993 / CIP 104536 / JCM 13569 / NCTC 13031 / TMC 1543 / L948)</name>
    <name type="common">Mycobacterium abscessus</name>
    <dbReference type="NCBI Taxonomy" id="561007"/>
    <lineage>
        <taxon>Bacteria</taxon>
        <taxon>Bacillati</taxon>
        <taxon>Actinomycetota</taxon>
        <taxon>Actinomycetes</taxon>
        <taxon>Mycobacteriales</taxon>
        <taxon>Mycobacteriaceae</taxon>
        <taxon>Mycobacteroides</taxon>
        <taxon>Mycobacteroides abscessus</taxon>
    </lineage>
</organism>
<feature type="chain" id="PRO_1000140990" description="Small ribosomal subunit protein uS3">
    <location>
        <begin position="1"/>
        <end position="277"/>
    </location>
</feature>
<feature type="domain" description="KH type-2" evidence="1">
    <location>
        <begin position="38"/>
        <end position="106"/>
    </location>
</feature>
<feature type="region of interest" description="Disordered" evidence="2">
    <location>
        <begin position="217"/>
        <end position="277"/>
    </location>
</feature>
<feature type="compositionally biased region" description="Basic and acidic residues" evidence="2">
    <location>
        <begin position="225"/>
        <end position="235"/>
    </location>
</feature>
<feature type="compositionally biased region" description="Low complexity" evidence="2">
    <location>
        <begin position="242"/>
        <end position="261"/>
    </location>
</feature>